<accession>B0SHA8</accession>
<dbReference type="EC" id="6.1.1.10" evidence="1"/>
<dbReference type="EMBL" id="CP000777">
    <property type="protein sequence ID" value="ABZ95662.1"/>
    <property type="molecule type" value="Genomic_DNA"/>
</dbReference>
<dbReference type="RefSeq" id="WP_012390228.1">
    <property type="nucleotide sequence ID" value="NC_010842.1"/>
</dbReference>
<dbReference type="SMR" id="B0SHA8"/>
<dbReference type="KEGG" id="lbf:LBF_3193"/>
<dbReference type="HOGENOM" id="CLU_009710_7_0_12"/>
<dbReference type="GO" id="GO:0005829">
    <property type="term" value="C:cytosol"/>
    <property type="evidence" value="ECO:0007669"/>
    <property type="project" value="TreeGrafter"/>
</dbReference>
<dbReference type="GO" id="GO:0005524">
    <property type="term" value="F:ATP binding"/>
    <property type="evidence" value="ECO:0007669"/>
    <property type="project" value="UniProtKB-UniRule"/>
</dbReference>
<dbReference type="GO" id="GO:0046872">
    <property type="term" value="F:metal ion binding"/>
    <property type="evidence" value="ECO:0007669"/>
    <property type="project" value="UniProtKB-KW"/>
</dbReference>
<dbReference type="GO" id="GO:0004825">
    <property type="term" value="F:methionine-tRNA ligase activity"/>
    <property type="evidence" value="ECO:0007669"/>
    <property type="project" value="UniProtKB-UniRule"/>
</dbReference>
<dbReference type="GO" id="GO:0000049">
    <property type="term" value="F:tRNA binding"/>
    <property type="evidence" value="ECO:0007669"/>
    <property type="project" value="UniProtKB-KW"/>
</dbReference>
<dbReference type="GO" id="GO:0006431">
    <property type="term" value="P:methionyl-tRNA aminoacylation"/>
    <property type="evidence" value="ECO:0007669"/>
    <property type="project" value="UniProtKB-UniRule"/>
</dbReference>
<dbReference type="CDD" id="cd00814">
    <property type="entry name" value="MetRS_core"/>
    <property type="match status" value="1"/>
</dbReference>
<dbReference type="CDD" id="cd02800">
    <property type="entry name" value="tRNA_bind_EcMetRS_like"/>
    <property type="match status" value="1"/>
</dbReference>
<dbReference type="FunFam" id="2.20.28.20:FF:000001">
    <property type="entry name" value="Methionine--tRNA ligase"/>
    <property type="match status" value="1"/>
</dbReference>
<dbReference type="FunFam" id="2.40.50.140:FF:000042">
    <property type="entry name" value="Methionine--tRNA ligase"/>
    <property type="match status" value="1"/>
</dbReference>
<dbReference type="Gene3D" id="3.40.50.620">
    <property type="entry name" value="HUPs"/>
    <property type="match status" value="1"/>
</dbReference>
<dbReference type="Gene3D" id="1.10.730.10">
    <property type="entry name" value="Isoleucyl-tRNA Synthetase, Domain 1"/>
    <property type="match status" value="1"/>
</dbReference>
<dbReference type="Gene3D" id="2.20.28.20">
    <property type="entry name" value="Methionyl-tRNA synthetase, Zn-domain"/>
    <property type="match status" value="1"/>
</dbReference>
<dbReference type="Gene3D" id="2.40.50.140">
    <property type="entry name" value="Nucleic acid-binding proteins"/>
    <property type="match status" value="1"/>
</dbReference>
<dbReference type="HAMAP" id="MF_00098">
    <property type="entry name" value="Met_tRNA_synth_type1"/>
    <property type="match status" value="1"/>
</dbReference>
<dbReference type="InterPro" id="IPR001412">
    <property type="entry name" value="aa-tRNA-synth_I_CS"/>
</dbReference>
<dbReference type="InterPro" id="IPR041872">
    <property type="entry name" value="Anticodon_Met"/>
</dbReference>
<dbReference type="InterPro" id="IPR004495">
    <property type="entry name" value="Met-tRNA-synth_bsu_C"/>
</dbReference>
<dbReference type="InterPro" id="IPR023458">
    <property type="entry name" value="Met-tRNA_ligase_1"/>
</dbReference>
<dbReference type="InterPro" id="IPR014758">
    <property type="entry name" value="Met-tRNA_synth"/>
</dbReference>
<dbReference type="InterPro" id="IPR015413">
    <property type="entry name" value="Methionyl/Leucyl_tRNA_Synth"/>
</dbReference>
<dbReference type="InterPro" id="IPR033911">
    <property type="entry name" value="MetRS_core"/>
</dbReference>
<dbReference type="InterPro" id="IPR029038">
    <property type="entry name" value="MetRS_Zn"/>
</dbReference>
<dbReference type="InterPro" id="IPR012340">
    <property type="entry name" value="NA-bd_OB-fold"/>
</dbReference>
<dbReference type="InterPro" id="IPR014729">
    <property type="entry name" value="Rossmann-like_a/b/a_fold"/>
</dbReference>
<dbReference type="InterPro" id="IPR002547">
    <property type="entry name" value="tRNA-bd_dom"/>
</dbReference>
<dbReference type="InterPro" id="IPR009080">
    <property type="entry name" value="tRNAsynth_Ia_anticodon-bd"/>
</dbReference>
<dbReference type="NCBIfam" id="TIGR00398">
    <property type="entry name" value="metG"/>
    <property type="match status" value="1"/>
</dbReference>
<dbReference type="NCBIfam" id="TIGR00399">
    <property type="entry name" value="metG_C_term"/>
    <property type="match status" value="1"/>
</dbReference>
<dbReference type="NCBIfam" id="NF001100">
    <property type="entry name" value="PRK00133.1"/>
    <property type="match status" value="1"/>
</dbReference>
<dbReference type="PANTHER" id="PTHR45765">
    <property type="entry name" value="METHIONINE--TRNA LIGASE"/>
    <property type="match status" value="1"/>
</dbReference>
<dbReference type="PANTHER" id="PTHR45765:SF1">
    <property type="entry name" value="METHIONINE--TRNA LIGASE, CYTOPLASMIC"/>
    <property type="match status" value="1"/>
</dbReference>
<dbReference type="Pfam" id="PF19303">
    <property type="entry name" value="Anticodon_3"/>
    <property type="match status" value="1"/>
</dbReference>
<dbReference type="Pfam" id="PF09334">
    <property type="entry name" value="tRNA-synt_1g"/>
    <property type="match status" value="1"/>
</dbReference>
<dbReference type="Pfam" id="PF01588">
    <property type="entry name" value="tRNA_bind"/>
    <property type="match status" value="1"/>
</dbReference>
<dbReference type="PRINTS" id="PR01041">
    <property type="entry name" value="TRNASYNTHMET"/>
</dbReference>
<dbReference type="SUPFAM" id="SSF47323">
    <property type="entry name" value="Anticodon-binding domain of a subclass of class I aminoacyl-tRNA synthetases"/>
    <property type="match status" value="1"/>
</dbReference>
<dbReference type="SUPFAM" id="SSF57770">
    <property type="entry name" value="Methionyl-tRNA synthetase (MetRS), Zn-domain"/>
    <property type="match status" value="1"/>
</dbReference>
<dbReference type="SUPFAM" id="SSF50249">
    <property type="entry name" value="Nucleic acid-binding proteins"/>
    <property type="match status" value="1"/>
</dbReference>
<dbReference type="SUPFAM" id="SSF52374">
    <property type="entry name" value="Nucleotidylyl transferase"/>
    <property type="match status" value="1"/>
</dbReference>
<dbReference type="PROSITE" id="PS00178">
    <property type="entry name" value="AA_TRNA_LIGASE_I"/>
    <property type="match status" value="1"/>
</dbReference>
<dbReference type="PROSITE" id="PS50886">
    <property type="entry name" value="TRBD"/>
    <property type="match status" value="1"/>
</dbReference>
<evidence type="ECO:0000255" key="1">
    <source>
        <dbReference type="HAMAP-Rule" id="MF_00098"/>
    </source>
</evidence>
<evidence type="ECO:0000256" key="2">
    <source>
        <dbReference type="SAM" id="MobiDB-lite"/>
    </source>
</evidence>
<organism>
    <name type="scientific">Leptospira biflexa serovar Patoc (strain Patoc 1 / Ames)</name>
    <dbReference type="NCBI Taxonomy" id="355278"/>
    <lineage>
        <taxon>Bacteria</taxon>
        <taxon>Pseudomonadati</taxon>
        <taxon>Spirochaetota</taxon>
        <taxon>Spirochaetia</taxon>
        <taxon>Leptospirales</taxon>
        <taxon>Leptospiraceae</taxon>
        <taxon>Leptospira</taxon>
    </lineage>
</organism>
<reference key="1">
    <citation type="journal article" date="2008" name="PLoS ONE">
        <title>Genome sequence of the saprophyte Leptospira biflexa provides insights into the evolution of Leptospira and the pathogenesis of leptospirosis.</title>
        <authorList>
            <person name="Picardeau M."/>
            <person name="Bulach D.M."/>
            <person name="Bouchier C."/>
            <person name="Zuerner R.L."/>
            <person name="Zidane N."/>
            <person name="Wilson P.J."/>
            <person name="Creno S."/>
            <person name="Kuczek E.S."/>
            <person name="Bommezzadri S."/>
            <person name="Davis J.C."/>
            <person name="McGrath A."/>
            <person name="Johnson M.J."/>
            <person name="Boursaux-Eude C."/>
            <person name="Seemann T."/>
            <person name="Rouy Z."/>
            <person name="Coppel R.L."/>
            <person name="Rood J.I."/>
            <person name="Lajus A."/>
            <person name="Davies J.K."/>
            <person name="Medigue C."/>
            <person name="Adler B."/>
        </authorList>
    </citation>
    <scope>NUCLEOTIDE SEQUENCE [LARGE SCALE GENOMIC DNA]</scope>
    <source>
        <strain>Patoc 1 / Ames</strain>
    </source>
</reference>
<name>SYM_LEPBA</name>
<protein>
    <recommendedName>
        <fullName evidence="1">Methionine--tRNA ligase</fullName>
        <ecNumber evidence="1">6.1.1.10</ecNumber>
    </recommendedName>
    <alternativeName>
        <fullName evidence="1">Methionyl-tRNA synthetase</fullName>
        <shortName evidence="1">MetRS</shortName>
    </alternativeName>
</protein>
<sequence>MSKHILVTSALPYANGSIHLGHILEAVQTDIWVRFQKLIGNECYFFCADDTHGTPIMIAAKKAGKTPESMIEEVQKEHYKDLTSFGVEYDNYYTTNSEENKKFSESIYLTLKKNGHIVARNIEQSYCEHDKMFLPDRFIKGTCPKCGAKDQYGDSCEVCGTSYSPKDLKDSYCSICGTTPVLRESKHLFFKLQDFQNQLKNWMEEGNRLNEGAQKKLQEWFTSGLQEWDISRDGPYFGFAIPEEENKYFYVWLDAPIGYMASSLNHLKDERKFNEFWKEGKGEIVHFIGKDILYFHGLFWPAMLMGSGYKAPSQLNVHGFLTVNGEKMSKSRGTFINASTFAKYLDVEHFRFYLACRLGSGMEDVDISFDDFVSRVNSDLIGNLVNLVSRVSTSILDKMDRKLGILSTEGKSLVSELLSKETEIREAYVSRNYSKVMRDITGLGDKVNKYVNDYAPWNLIKTDVEKAREVVTTSLNCAKILFTYLAPVTPKIVHSLADLFQIPNLSFLNLTETIENKVLGPYQMLSKRVEEKNITIMITETKETFEKSNPEKAKQDPSKSNTNEVKSATVSEDGFITIDELSKVELRVGLIKEANPVEGADKLLFVKVDLGEKGIKNVFAGIKASYTAEELVGKKVVVVANLKPRQMKFGLSEAMLLASGKDKTLSLFVPDRDASPGDLLK</sequence>
<proteinExistence type="inferred from homology"/>
<feature type="chain" id="PRO_1000093718" description="Methionine--tRNA ligase">
    <location>
        <begin position="1"/>
        <end position="681"/>
    </location>
</feature>
<feature type="domain" description="tRNA-binding" evidence="1">
    <location>
        <begin position="580"/>
        <end position="681"/>
    </location>
</feature>
<feature type="region of interest" description="Disordered" evidence="2">
    <location>
        <begin position="545"/>
        <end position="566"/>
    </location>
</feature>
<feature type="short sequence motif" description="'HIGH' region">
    <location>
        <begin position="12"/>
        <end position="22"/>
    </location>
</feature>
<feature type="short sequence motif" description="'KMSKS' region">
    <location>
        <begin position="327"/>
        <end position="331"/>
    </location>
</feature>
<feature type="compositionally biased region" description="Basic and acidic residues" evidence="2">
    <location>
        <begin position="545"/>
        <end position="557"/>
    </location>
</feature>
<feature type="binding site" evidence="1">
    <location>
        <position position="143"/>
    </location>
    <ligand>
        <name>Zn(2+)</name>
        <dbReference type="ChEBI" id="CHEBI:29105"/>
    </ligand>
</feature>
<feature type="binding site" evidence="1">
    <location>
        <position position="146"/>
    </location>
    <ligand>
        <name>Zn(2+)</name>
        <dbReference type="ChEBI" id="CHEBI:29105"/>
    </ligand>
</feature>
<feature type="binding site" evidence="1">
    <location>
        <position position="156"/>
    </location>
    <ligand>
        <name>Zn(2+)</name>
        <dbReference type="ChEBI" id="CHEBI:29105"/>
    </ligand>
</feature>
<feature type="binding site" evidence="1">
    <location>
        <position position="159"/>
    </location>
    <ligand>
        <name>Zn(2+)</name>
        <dbReference type="ChEBI" id="CHEBI:29105"/>
    </ligand>
</feature>
<feature type="binding site" evidence="1">
    <location>
        <position position="330"/>
    </location>
    <ligand>
        <name>ATP</name>
        <dbReference type="ChEBI" id="CHEBI:30616"/>
    </ligand>
</feature>
<keyword id="KW-0030">Aminoacyl-tRNA synthetase</keyword>
<keyword id="KW-0067">ATP-binding</keyword>
<keyword id="KW-0963">Cytoplasm</keyword>
<keyword id="KW-0436">Ligase</keyword>
<keyword id="KW-0479">Metal-binding</keyword>
<keyword id="KW-0547">Nucleotide-binding</keyword>
<keyword id="KW-0648">Protein biosynthesis</keyword>
<keyword id="KW-0694">RNA-binding</keyword>
<keyword id="KW-0820">tRNA-binding</keyword>
<keyword id="KW-0862">Zinc</keyword>
<comment type="function">
    <text evidence="1">Is required not only for elongation of protein synthesis but also for the initiation of all mRNA translation through initiator tRNA(fMet) aminoacylation.</text>
</comment>
<comment type="catalytic activity">
    <reaction evidence="1">
        <text>tRNA(Met) + L-methionine + ATP = L-methionyl-tRNA(Met) + AMP + diphosphate</text>
        <dbReference type="Rhea" id="RHEA:13481"/>
        <dbReference type="Rhea" id="RHEA-COMP:9667"/>
        <dbReference type="Rhea" id="RHEA-COMP:9698"/>
        <dbReference type="ChEBI" id="CHEBI:30616"/>
        <dbReference type="ChEBI" id="CHEBI:33019"/>
        <dbReference type="ChEBI" id="CHEBI:57844"/>
        <dbReference type="ChEBI" id="CHEBI:78442"/>
        <dbReference type="ChEBI" id="CHEBI:78530"/>
        <dbReference type="ChEBI" id="CHEBI:456215"/>
        <dbReference type="EC" id="6.1.1.10"/>
    </reaction>
</comment>
<comment type="cofactor">
    <cofactor evidence="1">
        <name>Zn(2+)</name>
        <dbReference type="ChEBI" id="CHEBI:29105"/>
    </cofactor>
    <text evidence="1">Binds 1 zinc ion per subunit.</text>
</comment>
<comment type="subunit">
    <text evidence="1">Homodimer.</text>
</comment>
<comment type="subcellular location">
    <subcellularLocation>
        <location evidence="1">Cytoplasm</location>
    </subcellularLocation>
</comment>
<comment type="similarity">
    <text evidence="1">Belongs to the class-I aminoacyl-tRNA synthetase family. MetG type 1 subfamily.</text>
</comment>
<gene>
    <name evidence="1" type="primary">metG</name>
    <name type="ordered locus">LBF_3193</name>
</gene>